<evidence type="ECO:0000256" key="1">
    <source>
        <dbReference type="SAM" id="MobiDB-lite"/>
    </source>
</evidence>
<evidence type="ECO:0000269" key="2">
    <source>
    </source>
</evidence>
<evidence type="ECO:0000303" key="3">
    <source>
    </source>
</evidence>
<evidence type="ECO:0000305" key="4"/>
<gene>
    <name evidence="3" type="primary">BC2</name>
    <name type="ORF">MGG_08386</name>
</gene>
<sequence>MEDIGKAGFFSDKSIGTGENTPLLDSYTFDFDSGPYGGAHYTITGVPDMSTGFSTFAGTGLSATEMGYCYPFGVDPSSRGDGSIHPPKCRYEKSIMQVHPESGDLGMQGATLFPSSPTSLESVRKRALDLHCFLFTQLHCVTDEDLAEAILSPFIFSESVKEPTGPRANIIQRLIYASECLLGLISTLSFLWTGCEDSGNSPPASMANQQGPQFQFPSRTQHKSNSVLAQHLLGLAGRSLHLEDSANFTGRQHTASPSETSVVDLPTITTILTCHVGILSVYRYTFSRIHDALRACGSSPSGTPESELTSPHKRATTCSPLPNKDTLPLNMPFVLGLRVQLEIMTHMLDRMRAAWATAMEDHPGHEDHQQQQEEVKQHDRLSHHKRATLATLKSMLALNGHELSNQDGGTGIGAVGDLGDRVRRLLRNCDKGMY</sequence>
<name>BC2_PYRO7</name>
<reference key="1">
    <citation type="journal article" date="2005" name="Nature">
        <title>The genome sequence of the rice blast fungus Magnaporthe grisea.</title>
        <authorList>
            <person name="Dean R.A."/>
            <person name="Talbot N.J."/>
            <person name="Ebbole D.J."/>
            <person name="Farman M.L."/>
            <person name="Mitchell T.K."/>
            <person name="Orbach M.J."/>
            <person name="Thon M.R."/>
            <person name="Kulkarni R."/>
            <person name="Xu J.-R."/>
            <person name="Pan H."/>
            <person name="Read N.D."/>
            <person name="Lee Y.-H."/>
            <person name="Carbone I."/>
            <person name="Brown D."/>
            <person name="Oh Y.Y."/>
            <person name="Donofrio N."/>
            <person name="Jeong J.S."/>
            <person name="Soanes D.M."/>
            <person name="Djonovic S."/>
            <person name="Kolomiets E."/>
            <person name="Rehmeyer C."/>
            <person name="Li W."/>
            <person name="Harding M."/>
            <person name="Kim S."/>
            <person name="Lebrun M.-H."/>
            <person name="Bohnert H."/>
            <person name="Coughlan S."/>
            <person name="Butler J."/>
            <person name="Calvo S.E."/>
            <person name="Ma L.-J."/>
            <person name="Nicol R."/>
            <person name="Purcell S."/>
            <person name="Nusbaum C."/>
            <person name="Galagan J.E."/>
            <person name="Birren B.W."/>
        </authorList>
    </citation>
    <scope>NUCLEOTIDE SEQUENCE [LARGE SCALE GENOMIC DNA]</scope>
    <source>
        <strain>70-15 / ATCC MYA-4617 / FGSC 8958</strain>
    </source>
</reference>
<reference key="2">
    <citation type="journal article" date="2008" name="New Phytol.">
        <title>Magnaporthe grisea avirulence gene ACE1 belongs to an infection-specific gene cluster involved in secondary metabolism.</title>
        <authorList>
            <person name="Collemare J."/>
            <person name="Pianfetti M."/>
            <person name="Houlle A.E."/>
            <person name="Morin D."/>
            <person name="Camborde L."/>
            <person name="Gagey M.J."/>
            <person name="Barbisan C."/>
            <person name="Fudal I."/>
            <person name="Lebrun M.H."/>
            <person name="Boehnert H.U."/>
        </authorList>
    </citation>
    <scope>FUNCTION</scope>
    <scope>INDUCTION</scope>
    <scope>PATHWAY</scope>
</reference>
<accession>G4MWA6</accession>
<feature type="chain" id="PRO_0000449443" description="Pyrichalasin H cluster regulator BC2">
    <location>
        <begin position="1"/>
        <end position="434"/>
    </location>
</feature>
<feature type="region of interest" description="Disordered" evidence="1">
    <location>
        <begin position="297"/>
        <end position="321"/>
    </location>
</feature>
<feature type="region of interest" description="Disordered" evidence="1">
    <location>
        <begin position="362"/>
        <end position="383"/>
    </location>
</feature>
<feature type="compositionally biased region" description="Polar residues" evidence="1">
    <location>
        <begin position="298"/>
        <end position="309"/>
    </location>
</feature>
<feature type="compositionally biased region" description="Basic and acidic residues" evidence="1">
    <location>
        <begin position="362"/>
        <end position="380"/>
    </location>
</feature>
<dbReference type="EMBL" id="CM001232">
    <property type="protein sequence ID" value="EHA55866.1"/>
    <property type="molecule type" value="Genomic_DNA"/>
</dbReference>
<dbReference type="RefSeq" id="XP_003715673.1">
    <property type="nucleotide sequence ID" value="XM_003715625.1"/>
</dbReference>
<dbReference type="EnsemblFungi" id="MGG_08386T0">
    <property type="protein sequence ID" value="MGG_08386T0"/>
    <property type="gene ID" value="MGG_08386"/>
</dbReference>
<dbReference type="GeneID" id="2678482"/>
<dbReference type="KEGG" id="mgr:MGG_08386"/>
<dbReference type="VEuPathDB" id="FungiDB:MGG_08386"/>
<dbReference type="eggNOG" id="ENOG502R9RH">
    <property type="taxonomic scope" value="Eukaryota"/>
</dbReference>
<dbReference type="HOGENOM" id="CLU_631725_0_0_1"/>
<dbReference type="InParanoid" id="G4MWA6"/>
<dbReference type="OrthoDB" id="3434319at2759"/>
<dbReference type="Proteomes" id="UP000009058">
    <property type="component" value="Chromosome 2"/>
</dbReference>
<dbReference type="GO" id="GO:0005634">
    <property type="term" value="C:nucleus"/>
    <property type="evidence" value="ECO:0007669"/>
    <property type="project" value="UniProtKB-SubCell"/>
</dbReference>
<dbReference type="GO" id="GO:0003677">
    <property type="term" value="F:DNA binding"/>
    <property type="evidence" value="ECO:0007669"/>
    <property type="project" value="UniProtKB-KW"/>
</dbReference>
<dbReference type="GO" id="GO:0046872">
    <property type="term" value="F:metal ion binding"/>
    <property type="evidence" value="ECO:0007669"/>
    <property type="project" value="UniProtKB-KW"/>
</dbReference>
<proteinExistence type="evidence at transcript level"/>
<comment type="function">
    <text evidence="2">Transcription factor probably involved in regulation of gene cluster that mediates the biosynthesis of a tyrosine-derived cytochalasan acting as a fungal signal recognized by resistant rice plants and leads to avirulence in Pi33 resistant rice cultivars.</text>
</comment>
<comment type="subcellular location">
    <subcellularLocation>
        <location evidence="4">Nucleus</location>
    </subcellularLocation>
</comment>
<comment type="induction">
    <text evidence="2">Expressed exclusively during fungal penetration of host leaves, the time point at which plant defense reactions are triggered.</text>
</comment>
<comment type="caution">
    <text evidence="4">Due to high divergence, the Zn(2)-C6 fungal-type DNA-binding domain cannot be predicted.</text>
</comment>
<keyword id="KW-0238">DNA-binding</keyword>
<keyword id="KW-0479">Metal-binding</keyword>
<keyword id="KW-0539">Nucleus</keyword>
<keyword id="KW-1185">Reference proteome</keyword>
<keyword id="KW-0804">Transcription</keyword>
<keyword id="KW-0805">Transcription regulation</keyword>
<keyword id="KW-0862">Zinc</keyword>
<organism>
    <name type="scientific">Pyricularia oryzae (strain 70-15 / ATCC MYA-4617 / FGSC 8958)</name>
    <name type="common">Rice blast fungus</name>
    <name type="synonym">Magnaporthe oryzae</name>
    <dbReference type="NCBI Taxonomy" id="242507"/>
    <lineage>
        <taxon>Eukaryota</taxon>
        <taxon>Fungi</taxon>
        <taxon>Dikarya</taxon>
        <taxon>Ascomycota</taxon>
        <taxon>Pezizomycotina</taxon>
        <taxon>Sordariomycetes</taxon>
        <taxon>Sordariomycetidae</taxon>
        <taxon>Magnaporthales</taxon>
        <taxon>Pyriculariaceae</taxon>
        <taxon>Pyricularia</taxon>
    </lineage>
</organism>
<protein>
    <recommendedName>
        <fullName evidence="3">Pyrichalasin H cluster regulator BC2</fullName>
    </recommendedName>
    <alternativeName>
        <fullName evidence="3">ACE1 cytochalasan biosynthesis cluster protein BC2</fullName>
    </alternativeName>
</protein>